<dbReference type="EC" id="2.1.1.242" evidence="1"/>
<dbReference type="EMBL" id="AE017143">
    <property type="protein sequence ID" value="AAP95565.1"/>
    <property type="molecule type" value="Genomic_DNA"/>
</dbReference>
<dbReference type="RefSeq" id="WP_010944618.1">
    <property type="nucleotide sequence ID" value="NC_002940.2"/>
</dbReference>
<dbReference type="SMR" id="Q7VNB5"/>
<dbReference type="STRING" id="233412.HD_0640"/>
<dbReference type="KEGG" id="hdu:HD_0640"/>
<dbReference type="eggNOG" id="COG0742">
    <property type="taxonomic scope" value="Bacteria"/>
</dbReference>
<dbReference type="HOGENOM" id="CLU_076324_0_0_6"/>
<dbReference type="OrthoDB" id="3191794at2"/>
<dbReference type="Proteomes" id="UP000001022">
    <property type="component" value="Chromosome"/>
</dbReference>
<dbReference type="GO" id="GO:0005737">
    <property type="term" value="C:cytoplasm"/>
    <property type="evidence" value="ECO:0007669"/>
    <property type="project" value="UniProtKB-SubCell"/>
</dbReference>
<dbReference type="GO" id="GO:0008990">
    <property type="term" value="F:rRNA (guanine-N2-)-methyltransferase activity"/>
    <property type="evidence" value="ECO:0007669"/>
    <property type="project" value="UniProtKB-UniRule"/>
</dbReference>
<dbReference type="Gene3D" id="3.40.50.150">
    <property type="entry name" value="Vaccinia Virus protein VP39"/>
    <property type="match status" value="1"/>
</dbReference>
<dbReference type="Gene3D" id="3.40.1630.10">
    <property type="entry name" value="YhiQ-like domain"/>
    <property type="match status" value="1"/>
</dbReference>
<dbReference type="HAMAP" id="MF_01523">
    <property type="entry name" value="16SrRNA_methyltr_J"/>
    <property type="match status" value="1"/>
</dbReference>
<dbReference type="InterPro" id="IPR007536">
    <property type="entry name" value="16SrRNA_methylTrfase_J"/>
</dbReference>
<dbReference type="InterPro" id="IPR029063">
    <property type="entry name" value="SAM-dependent_MTases_sf"/>
</dbReference>
<dbReference type="PANTHER" id="PTHR36112">
    <property type="entry name" value="RIBOSOMAL RNA SMALL SUBUNIT METHYLTRANSFERASE J"/>
    <property type="match status" value="1"/>
</dbReference>
<dbReference type="PANTHER" id="PTHR36112:SF1">
    <property type="entry name" value="RIBOSOMAL RNA SMALL SUBUNIT METHYLTRANSFERASE J"/>
    <property type="match status" value="1"/>
</dbReference>
<dbReference type="Pfam" id="PF04445">
    <property type="entry name" value="SAM_MT"/>
    <property type="match status" value="1"/>
</dbReference>
<dbReference type="SUPFAM" id="SSF53335">
    <property type="entry name" value="S-adenosyl-L-methionine-dependent methyltransferases"/>
    <property type="match status" value="1"/>
</dbReference>
<gene>
    <name evidence="1" type="primary">rsmJ</name>
    <name type="ordered locus">HD_0640</name>
</gene>
<accession>Q7VNB5</accession>
<organism>
    <name type="scientific">Haemophilus ducreyi (strain 35000HP / ATCC 700724)</name>
    <dbReference type="NCBI Taxonomy" id="233412"/>
    <lineage>
        <taxon>Bacteria</taxon>
        <taxon>Pseudomonadati</taxon>
        <taxon>Pseudomonadota</taxon>
        <taxon>Gammaproteobacteria</taxon>
        <taxon>Pasteurellales</taxon>
        <taxon>Pasteurellaceae</taxon>
        <taxon>Haemophilus</taxon>
    </lineage>
</organism>
<evidence type="ECO:0000255" key="1">
    <source>
        <dbReference type="HAMAP-Rule" id="MF_01523"/>
    </source>
</evidence>
<reference key="1">
    <citation type="submission" date="2003-06" db="EMBL/GenBank/DDBJ databases">
        <title>The complete genome sequence of Haemophilus ducreyi.</title>
        <authorList>
            <person name="Munson R.S. Jr."/>
            <person name="Ray W.C."/>
            <person name="Mahairas G."/>
            <person name="Sabo P."/>
            <person name="Mungur R."/>
            <person name="Johnson L."/>
            <person name="Nguyen D."/>
            <person name="Wang J."/>
            <person name="Forst C."/>
            <person name="Hood L."/>
        </authorList>
    </citation>
    <scope>NUCLEOTIDE SEQUENCE [LARGE SCALE GENOMIC DNA]</scope>
    <source>
        <strain>35000HP / ATCC 700724</strain>
    </source>
</reference>
<protein>
    <recommendedName>
        <fullName evidence="1">Ribosomal RNA small subunit methyltransferase J</fullName>
        <ecNumber evidence="1">2.1.1.242</ecNumber>
    </recommendedName>
    <alternativeName>
        <fullName evidence="1">16S rRNA m2G1516 methyltransferase</fullName>
    </alternativeName>
    <alternativeName>
        <fullName evidence="1">rRNA (guanine-N(2)-)-methyltransferase</fullName>
    </alternativeName>
</protein>
<sequence length="251" mass="27795">MTIQLINESSNTAKFQQICEKWQLVHDKSASLALVLTDTRLELRKLDEAKLGAIAVNFVDGTLAHRRKFGGGRGEAIAKAVGIKGNYLPSVIDATAGLGRDAFVLAAIGCKVTLVERHPVIAALLEDGLTRAYLDAEIGEFMQQRMQLANVHNIAQLDTTTQSADVVYLDPMYPHKQKSALVKKEMRVFQHLVGADLDADQFLLPAKALATKRVVVKRPDYAPPLAEQHPSFSQKTKNHRFDIYLSPLQKR</sequence>
<proteinExistence type="inferred from homology"/>
<keyword id="KW-0963">Cytoplasm</keyword>
<keyword id="KW-0489">Methyltransferase</keyword>
<keyword id="KW-1185">Reference proteome</keyword>
<keyword id="KW-0698">rRNA processing</keyword>
<keyword id="KW-0949">S-adenosyl-L-methionine</keyword>
<keyword id="KW-0808">Transferase</keyword>
<name>RSMJ_HAEDU</name>
<feature type="chain" id="PRO_0000212068" description="Ribosomal RNA small subunit methyltransferase J">
    <location>
        <begin position="1"/>
        <end position="251"/>
    </location>
</feature>
<feature type="binding site" evidence="1">
    <location>
        <begin position="100"/>
        <end position="101"/>
    </location>
    <ligand>
        <name>S-adenosyl-L-methionine</name>
        <dbReference type="ChEBI" id="CHEBI:59789"/>
    </ligand>
</feature>
<feature type="binding site" evidence="1">
    <location>
        <begin position="116"/>
        <end position="117"/>
    </location>
    <ligand>
        <name>S-adenosyl-L-methionine</name>
        <dbReference type="ChEBI" id="CHEBI:59789"/>
    </ligand>
</feature>
<feature type="binding site" evidence="1">
    <location>
        <position position="170"/>
    </location>
    <ligand>
        <name>S-adenosyl-L-methionine</name>
        <dbReference type="ChEBI" id="CHEBI:59789"/>
    </ligand>
</feature>
<comment type="function">
    <text evidence="1">Specifically methylates the guanosine in position 1516 of 16S rRNA.</text>
</comment>
<comment type="catalytic activity">
    <reaction evidence="1">
        <text>guanosine(1516) in 16S rRNA + S-adenosyl-L-methionine = N(2)-methylguanosine(1516) in 16S rRNA + S-adenosyl-L-homocysteine + H(+)</text>
        <dbReference type="Rhea" id="RHEA:43220"/>
        <dbReference type="Rhea" id="RHEA-COMP:10412"/>
        <dbReference type="Rhea" id="RHEA-COMP:10413"/>
        <dbReference type="ChEBI" id="CHEBI:15378"/>
        <dbReference type="ChEBI" id="CHEBI:57856"/>
        <dbReference type="ChEBI" id="CHEBI:59789"/>
        <dbReference type="ChEBI" id="CHEBI:74269"/>
        <dbReference type="ChEBI" id="CHEBI:74481"/>
        <dbReference type="EC" id="2.1.1.242"/>
    </reaction>
</comment>
<comment type="subcellular location">
    <subcellularLocation>
        <location evidence="1">Cytoplasm</location>
    </subcellularLocation>
</comment>
<comment type="similarity">
    <text evidence="1">Belongs to the methyltransferase superfamily. RsmJ family.</text>
</comment>